<feature type="chain" id="PRO_0000240551" description="Probable chorismate pyruvate-lyase">
    <location>
        <begin position="1"/>
        <end position="170"/>
    </location>
</feature>
<feature type="binding site" evidence="1">
    <location>
        <position position="77"/>
    </location>
    <ligand>
        <name>substrate</name>
    </ligand>
</feature>
<feature type="binding site" evidence="1">
    <location>
        <position position="114"/>
    </location>
    <ligand>
        <name>substrate</name>
    </ligand>
</feature>
<feature type="binding site" evidence="1">
    <location>
        <position position="157"/>
    </location>
    <ligand>
        <name>substrate</name>
    </ligand>
</feature>
<sequence>MSNYSQLLQNATWQPSTDMQLPLSISSWLELSTSLTTQLKQAFGEVNVCVLAESWITTLNENERQFFPKQACPCWCREVILKSQDIPLIFARTLIPASLLTQHSELQQLGNRALGEWLFMQSDRIRQKLELTHDKNTALYARRALMSIGAENMMVAELFLTPQIFTRVVK</sequence>
<name>UBIC_PASMU</name>
<comment type="function">
    <text evidence="1">Removes the pyruvyl group from chorismate, with concomitant aromatization of the ring, to provide 4-hydroxybenzoate (4HB) for the ubiquinone pathway.</text>
</comment>
<comment type="catalytic activity">
    <reaction evidence="1">
        <text>chorismate = 4-hydroxybenzoate + pyruvate</text>
        <dbReference type="Rhea" id="RHEA:16505"/>
        <dbReference type="ChEBI" id="CHEBI:15361"/>
        <dbReference type="ChEBI" id="CHEBI:17879"/>
        <dbReference type="ChEBI" id="CHEBI:29748"/>
        <dbReference type="EC" id="4.1.3.40"/>
    </reaction>
</comment>
<comment type="pathway">
    <text evidence="1">Cofactor biosynthesis; ubiquinone biosynthesis.</text>
</comment>
<comment type="subcellular location">
    <subcellularLocation>
        <location evidence="1">Cytoplasm</location>
    </subcellularLocation>
</comment>
<comment type="similarity">
    <text evidence="1">Belongs to the UbiC family.</text>
</comment>
<proteinExistence type="inferred from homology"/>
<dbReference type="EC" id="4.1.3.40" evidence="1"/>
<dbReference type="EMBL" id="AE004439">
    <property type="protein sequence ID" value="AAK03002.1"/>
    <property type="molecule type" value="Genomic_DNA"/>
</dbReference>
<dbReference type="RefSeq" id="WP_010906917.1">
    <property type="nucleotide sequence ID" value="NC_002663.1"/>
</dbReference>
<dbReference type="SMR" id="Q9CMB5"/>
<dbReference type="STRING" id="272843.PM0918"/>
<dbReference type="EnsemblBacteria" id="AAK03002">
    <property type="protein sequence ID" value="AAK03002"/>
    <property type="gene ID" value="PM0918"/>
</dbReference>
<dbReference type="KEGG" id="pmu:PM0918"/>
<dbReference type="PATRIC" id="fig|272843.6.peg.928"/>
<dbReference type="HOGENOM" id="CLU_096824_1_1_6"/>
<dbReference type="OrthoDB" id="9789493at2"/>
<dbReference type="UniPathway" id="UPA00232"/>
<dbReference type="Proteomes" id="UP000000809">
    <property type="component" value="Chromosome"/>
</dbReference>
<dbReference type="GO" id="GO:0005829">
    <property type="term" value="C:cytosol"/>
    <property type="evidence" value="ECO:0007669"/>
    <property type="project" value="TreeGrafter"/>
</dbReference>
<dbReference type="GO" id="GO:0008813">
    <property type="term" value="F:chorismate lyase activity"/>
    <property type="evidence" value="ECO:0007669"/>
    <property type="project" value="UniProtKB-UniRule"/>
</dbReference>
<dbReference type="GO" id="GO:0042866">
    <property type="term" value="P:pyruvate biosynthetic process"/>
    <property type="evidence" value="ECO:0007669"/>
    <property type="project" value="UniProtKB-UniRule"/>
</dbReference>
<dbReference type="GO" id="GO:0006744">
    <property type="term" value="P:ubiquinone biosynthetic process"/>
    <property type="evidence" value="ECO:0007669"/>
    <property type="project" value="UniProtKB-UniRule"/>
</dbReference>
<dbReference type="Gene3D" id="3.40.1410.10">
    <property type="entry name" value="Chorismate lyase-like"/>
    <property type="match status" value="1"/>
</dbReference>
<dbReference type="HAMAP" id="MF_01632">
    <property type="entry name" value="UbiC"/>
    <property type="match status" value="1"/>
</dbReference>
<dbReference type="InterPro" id="IPR007440">
    <property type="entry name" value="Chorismate--pyruvate_lyase"/>
</dbReference>
<dbReference type="InterPro" id="IPR028978">
    <property type="entry name" value="Chorismate_lyase_/UTRA_dom_sf"/>
</dbReference>
<dbReference type="PANTHER" id="PTHR38683">
    <property type="entry name" value="CHORISMATE PYRUVATE-LYASE"/>
    <property type="match status" value="1"/>
</dbReference>
<dbReference type="PANTHER" id="PTHR38683:SF1">
    <property type="entry name" value="CHORISMATE PYRUVATE-LYASE"/>
    <property type="match status" value="1"/>
</dbReference>
<dbReference type="Pfam" id="PF04345">
    <property type="entry name" value="Chor_lyase"/>
    <property type="match status" value="1"/>
</dbReference>
<dbReference type="SUPFAM" id="SSF64288">
    <property type="entry name" value="Chorismate lyase-like"/>
    <property type="match status" value="1"/>
</dbReference>
<accession>Q9CMB5</accession>
<organism>
    <name type="scientific">Pasteurella multocida (strain Pm70)</name>
    <dbReference type="NCBI Taxonomy" id="272843"/>
    <lineage>
        <taxon>Bacteria</taxon>
        <taxon>Pseudomonadati</taxon>
        <taxon>Pseudomonadota</taxon>
        <taxon>Gammaproteobacteria</taxon>
        <taxon>Pasteurellales</taxon>
        <taxon>Pasteurellaceae</taxon>
        <taxon>Pasteurella</taxon>
    </lineage>
</organism>
<protein>
    <recommendedName>
        <fullName evidence="1">Probable chorismate pyruvate-lyase</fullName>
        <shortName evidence="1">CL</shortName>
        <shortName evidence="1">CPL</shortName>
        <ecNumber evidence="1">4.1.3.40</ecNumber>
    </recommendedName>
</protein>
<gene>
    <name evidence="1" type="primary">ubiC</name>
    <name type="ordered locus">PM0918</name>
</gene>
<reference key="1">
    <citation type="journal article" date="2001" name="Proc. Natl. Acad. Sci. U.S.A.">
        <title>Complete genomic sequence of Pasteurella multocida Pm70.</title>
        <authorList>
            <person name="May B.J."/>
            <person name="Zhang Q."/>
            <person name="Li L.L."/>
            <person name="Paustian M.L."/>
            <person name="Whittam T.S."/>
            <person name="Kapur V."/>
        </authorList>
    </citation>
    <scope>NUCLEOTIDE SEQUENCE [LARGE SCALE GENOMIC DNA]</scope>
    <source>
        <strain>Pm70</strain>
    </source>
</reference>
<evidence type="ECO:0000255" key="1">
    <source>
        <dbReference type="HAMAP-Rule" id="MF_01632"/>
    </source>
</evidence>
<keyword id="KW-0963">Cytoplasm</keyword>
<keyword id="KW-0456">Lyase</keyword>
<keyword id="KW-0670">Pyruvate</keyword>
<keyword id="KW-1185">Reference proteome</keyword>
<keyword id="KW-0831">Ubiquinone biosynthesis</keyword>